<comment type="function">
    <text evidence="1">Succinyl-CoA synthetase functions in the citric acid cycle (TCA), coupling the hydrolysis of succinyl-CoA to the synthesis of either ATP or GTP and thus represents the only step of substrate-level phosphorylation in the TCA. The beta subunit provides nucleotide specificity of the enzyme and binds the substrate succinate, while the binding sites for coenzyme A and phosphate are found in the alpha subunit.</text>
</comment>
<comment type="catalytic activity">
    <reaction evidence="1">
        <text>succinate + ATP + CoA = succinyl-CoA + ADP + phosphate</text>
        <dbReference type="Rhea" id="RHEA:17661"/>
        <dbReference type="ChEBI" id="CHEBI:30031"/>
        <dbReference type="ChEBI" id="CHEBI:30616"/>
        <dbReference type="ChEBI" id="CHEBI:43474"/>
        <dbReference type="ChEBI" id="CHEBI:57287"/>
        <dbReference type="ChEBI" id="CHEBI:57292"/>
        <dbReference type="ChEBI" id="CHEBI:456216"/>
        <dbReference type="EC" id="6.2.1.5"/>
    </reaction>
    <physiologicalReaction direction="right-to-left" evidence="1">
        <dbReference type="Rhea" id="RHEA:17663"/>
    </physiologicalReaction>
</comment>
<comment type="catalytic activity">
    <reaction evidence="1">
        <text>GTP + succinate + CoA = succinyl-CoA + GDP + phosphate</text>
        <dbReference type="Rhea" id="RHEA:22120"/>
        <dbReference type="ChEBI" id="CHEBI:30031"/>
        <dbReference type="ChEBI" id="CHEBI:37565"/>
        <dbReference type="ChEBI" id="CHEBI:43474"/>
        <dbReference type="ChEBI" id="CHEBI:57287"/>
        <dbReference type="ChEBI" id="CHEBI:57292"/>
        <dbReference type="ChEBI" id="CHEBI:58189"/>
    </reaction>
    <physiologicalReaction direction="right-to-left" evidence="1">
        <dbReference type="Rhea" id="RHEA:22122"/>
    </physiologicalReaction>
</comment>
<comment type="cofactor">
    <cofactor evidence="1">
        <name>Mg(2+)</name>
        <dbReference type="ChEBI" id="CHEBI:18420"/>
    </cofactor>
    <text evidence="1">Binds 1 Mg(2+) ion per subunit.</text>
</comment>
<comment type="pathway">
    <text evidence="1">Carbohydrate metabolism; tricarboxylic acid cycle; succinate from succinyl-CoA (ligase route): step 1/1.</text>
</comment>
<comment type="subunit">
    <text evidence="1">Heterotetramer of two alpha and two beta subunits.</text>
</comment>
<comment type="similarity">
    <text evidence="1">Belongs to the succinate/malate CoA ligase beta subunit family.</text>
</comment>
<reference key="1">
    <citation type="submission" date="2006-11" db="EMBL/GenBank/DDBJ databases">
        <title>Identification and characterization of a new conjugation/ type IVA secretion system (trb/tra) of L. pneumophila Corby localized on a mobile genomic island.</title>
        <authorList>
            <person name="Gloeckner G."/>
            <person name="Albert-Weissenberger C."/>
            <person name="Weinmann E."/>
            <person name="Jacobi S."/>
            <person name="Schunder E."/>
            <person name="Steinert M."/>
            <person name="Buchrieser C."/>
            <person name="Hacker J."/>
            <person name="Heuner K."/>
        </authorList>
    </citation>
    <scope>NUCLEOTIDE SEQUENCE [LARGE SCALE GENOMIC DNA]</scope>
    <source>
        <strain>Corby</strain>
    </source>
</reference>
<feature type="chain" id="PRO_1000082113" description="Succinate--CoA ligase [ADP-forming] subunit beta">
    <location>
        <begin position="1"/>
        <end position="387"/>
    </location>
</feature>
<feature type="domain" description="ATP-grasp" evidence="1">
    <location>
        <begin position="9"/>
        <end position="244"/>
    </location>
</feature>
<feature type="binding site" evidence="1">
    <location>
        <position position="46"/>
    </location>
    <ligand>
        <name>ATP</name>
        <dbReference type="ChEBI" id="CHEBI:30616"/>
    </ligand>
</feature>
<feature type="binding site" evidence="1">
    <location>
        <begin position="53"/>
        <end position="55"/>
    </location>
    <ligand>
        <name>ATP</name>
        <dbReference type="ChEBI" id="CHEBI:30616"/>
    </ligand>
</feature>
<feature type="binding site" evidence="1">
    <location>
        <position position="99"/>
    </location>
    <ligand>
        <name>ATP</name>
        <dbReference type="ChEBI" id="CHEBI:30616"/>
    </ligand>
</feature>
<feature type="binding site" evidence="1">
    <location>
        <position position="102"/>
    </location>
    <ligand>
        <name>ATP</name>
        <dbReference type="ChEBI" id="CHEBI:30616"/>
    </ligand>
</feature>
<feature type="binding site" evidence="1">
    <location>
        <position position="107"/>
    </location>
    <ligand>
        <name>ATP</name>
        <dbReference type="ChEBI" id="CHEBI:30616"/>
    </ligand>
</feature>
<feature type="binding site" evidence="1">
    <location>
        <position position="199"/>
    </location>
    <ligand>
        <name>Mg(2+)</name>
        <dbReference type="ChEBI" id="CHEBI:18420"/>
    </ligand>
</feature>
<feature type="binding site" evidence="1">
    <location>
        <position position="213"/>
    </location>
    <ligand>
        <name>Mg(2+)</name>
        <dbReference type="ChEBI" id="CHEBI:18420"/>
    </ligand>
</feature>
<feature type="binding site" evidence="1">
    <location>
        <position position="264"/>
    </location>
    <ligand>
        <name>substrate</name>
        <note>ligand shared with subunit alpha</note>
    </ligand>
</feature>
<feature type="binding site" evidence="1">
    <location>
        <begin position="321"/>
        <end position="323"/>
    </location>
    <ligand>
        <name>substrate</name>
        <note>ligand shared with subunit alpha</note>
    </ligand>
</feature>
<organism>
    <name type="scientific">Legionella pneumophila (strain Corby)</name>
    <dbReference type="NCBI Taxonomy" id="400673"/>
    <lineage>
        <taxon>Bacteria</taxon>
        <taxon>Pseudomonadati</taxon>
        <taxon>Pseudomonadota</taxon>
        <taxon>Gammaproteobacteria</taxon>
        <taxon>Legionellales</taxon>
        <taxon>Legionellaceae</taxon>
        <taxon>Legionella</taxon>
    </lineage>
</organism>
<sequence>MNLHEYQAKQLFASYGLPVPRGEVAYNVEDALLVASQLSTSRWVVKAQVHAGGRGKAGGVKLVSSKDELAAVAKSMLGTRLVTYQTDARGQPVNAILVEETCEIDKELYLGAVVDRSTRRVVIMASTEGGVEIEKVAHETPEKIFKVVVDPLVGVMPFQCRETAFKLGLKDDQIKQFTHLMMGLGKMFVDCDLSLLEINPLVITKSGQLICLDGKINIDGNALFRQPKLKNMRDVSQEDDRENRASDWELNYIPLDGTIGCMVNGAGLAMATMDVIKLHGGEPANFLDVGGGATKERVSEALKIIVSDEKVKGILVNIFGGIVRCDLIADGILAAVKEVDVKIPVVVRLEGNNAQLGAEILNKSNLNVIAATSLTDAAKKIVAAVSE</sequence>
<name>SUCC_LEGPC</name>
<evidence type="ECO:0000255" key="1">
    <source>
        <dbReference type="HAMAP-Rule" id="MF_00558"/>
    </source>
</evidence>
<keyword id="KW-0067">ATP-binding</keyword>
<keyword id="KW-0436">Ligase</keyword>
<keyword id="KW-0460">Magnesium</keyword>
<keyword id="KW-0479">Metal-binding</keyword>
<keyword id="KW-0547">Nucleotide-binding</keyword>
<keyword id="KW-0816">Tricarboxylic acid cycle</keyword>
<accession>A5IH21</accession>
<protein>
    <recommendedName>
        <fullName evidence="1">Succinate--CoA ligase [ADP-forming] subunit beta</fullName>
        <ecNumber evidence="1">6.2.1.5</ecNumber>
    </recommendedName>
    <alternativeName>
        <fullName evidence="1">Succinyl-CoA synthetase subunit beta</fullName>
        <shortName evidence="1">SCS-beta</shortName>
    </alternativeName>
</protein>
<proteinExistence type="inferred from homology"/>
<dbReference type="EC" id="6.2.1.5" evidence="1"/>
<dbReference type="EMBL" id="CP000675">
    <property type="protein sequence ID" value="ABQ56671.1"/>
    <property type="molecule type" value="Genomic_DNA"/>
</dbReference>
<dbReference type="RefSeq" id="WP_011214776.1">
    <property type="nucleotide sequence ID" value="NZ_JAPMSS010000006.1"/>
</dbReference>
<dbReference type="SMR" id="A5IH21"/>
<dbReference type="KEGG" id="lpc:LPC_2768"/>
<dbReference type="HOGENOM" id="CLU_037430_0_2_6"/>
<dbReference type="UniPathway" id="UPA00223">
    <property type="reaction ID" value="UER00999"/>
</dbReference>
<dbReference type="GO" id="GO:0005829">
    <property type="term" value="C:cytosol"/>
    <property type="evidence" value="ECO:0007669"/>
    <property type="project" value="TreeGrafter"/>
</dbReference>
<dbReference type="GO" id="GO:0042709">
    <property type="term" value="C:succinate-CoA ligase complex"/>
    <property type="evidence" value="ECO:0007669"/>
    <property type="project" value="TreeGrafter"/>
</dbReference>
<dbReference type="GO" id="GO:0005524">
    <property type="term" value="F:ATP binding"/>
    <property type="evidence" value="ECO:0007669"/>
    <property type="project" value="UniProtKB-UniRule"/>
</dbReference>
<dbReference type="GO" id="GO:0000287">
    <property type="term" value="F:magnesium ion binding"/>
    <property type="evidence" value="ECO:0007669"/>
    <property type="project" value="UniProtKB-UniRule"/>
</dbReference>
<dbReference type="GO" id="GO:0004775">
    <property type="term" value="F:succinate-CoA ligase (ADP-forming) activity"/>
    <property type="evidence" value="ECO:0007669"/>
    <property type="project" value="UniProtKB-UniRule"/>
</dbReference>
<dbReference type="GO" id="GO:0004776">
    <property type="term" value="F:succinate-CoA ligase (GDP-forming) activity"/>
    <property type="evidence" value="ECO:0007669"/>
    <property type="project" value="RHEA"/>
</dbReference>
<dbReference type="GO" id="GO:0006104">
    <property type="term" value="P:succinyl-CoA metabolic process"/>
    <property type="evidence" value="ECO:0007669"/>
    <property type="project" value="TreeGrafter"/>
</dbReference>
<dbReference type="GO" id="GO:0006099">
    <property type="term" value="P:tricarboxylic acid cycle"/>
    <property type="evidence" value="ECO:0007669"/>
    <property type="project" value="UniProtKB-UniRule"/>
</dbReference>
<dbReference type="FunFam" id="3.30.1490.20:FF:000002">
    <property type="entry name" value="Succinate--CoA ligase [ADP-forming] subunit beta"/>
    <property type="match status" value="1"/>
</dbReference>
<dbReference type="FunFam" id="3.30.470.20:FF:000002">
    <property type="entry name" value="Succinate--CoA ligase [ADP-forming] subunit beta"/>
    <property type="match status" value="1"/>
</dbReference>
<dbReference type="FunFam" id="3.40.50.261:FF:000001">
    <property type="entry name" value="Succinate--CoA ligase [ADP-forming] subunit beta"/>
    <property type="match status" value="1"/>
</dbReference>
<dbReference type="Gene3D" id="3.30.1490.20">
    <property type="entry name" value="ATP-grasp fold, A domain"/>
    <property type="match status" value="1"/>
</dbReference>
<dbReference type="Gene3D" id="3.30.470.20">
    <property type="entry name" value="ATP-grasp fold, B domain"/>
    <property type="match status" value="1"/>
</dbReference>
<dbReference type="Gene3D" id="3.40.50.261">
    <property type="entry name" value="Succinyl-CoA synthetase domains"/>
    <property type="match status" value="1"/>
</dbReference>
<dbReference type="HAMAP" id="MF_00558">
    <property type="entry name" value="Succ_CoA_beta"/>
    <property type="match status" value="1"/>
</dbReference>
<dbReference type="InterPro" id="IPR011761">
    <property type="entry name" value="ATP-grasp"/>
</dbReference>
<dbReference type="InterPro" id="IPR013650">
    <property type="entry name" value="ATP-grasp_succ-CoA_synth-type"/>
</dbReference>
<dbReference type="InterPro" id="IPR013815">
    <property type="entry name" value="ATP_grasp_subdomain_1"/>
</dbReference>
<dbReference type="InterPro" id="IPR017866">
    <property type="entry name" value="Succ-CoA_synthase_bsu_CS"/>
</dbReference>
<dbReference type="InterPro" id="IPR005811">
    <property type="entry name" value="SUCC_ACL_C"/>
</dbReference>
<dbReference type="InterPro" id="IPR005809">
    <property type="entry name" value="Succ_CoA_ligase-like_bsu"/>
</dbReference>
<dbReference type="InterPro" id="IPR016102">
    <property type="entry name" value="Succinyl-CoA_synth-like"/>
</dbReference>
<dbReference type="NCBIfam" id="NF001913">
    <property type="entry name" value="PRK00696.1"/>
    <property type="match status" value="1"/>
</dbReference>
<dbReference type="NCBIfam" id="TIGR01016">
    <property type="entry name" value="sucCoAbeta"/>
    <property type="match status" value="1"/>
</dbReference>
<dbReference type="PANTHER" id="PTHR11815:SF10">
    <property type="entry name" value="SUCCINATE--COA LIGASE [GDP-FORMING] SUBUNIT BETA, MITOCHONDRIAL"/>
    <property type="match status" value="1"/>
</dbReference>
<dbReference type="PANTHER" id="PTHR11815">
    <property type="entry name" value="SUCCINYL-COA SYNTHETASE BETA CHAIN"/>
    <property type="match status" value="1"/>
</dbReference>
<dbReference type="Pfam" id="PF08442">
    <property type="entry name" value="ATP-grasp_2"/>
    <property type="match status" value="1"/>
</dbReference>
<dbReference type="Pfam" id="PF00549">
    <property type="entry name" value="Ligase_CoA"/>
    <property type="match status" value="1"/>
</dbReference>
<dbReference type="PIRSF" id="PIRSF001554">
    <property type="entry name" value="SucCS_beta"/>
    <property type="match status" value="1"/>
</dbReference>
<dbReference type="SUPFAM" id="SSF56059">
    <property type="entry name" value="Glutathione synthetase ATP-binding domain-like"/>
    <property type="match status" value="1"/>
</dbReference>
<dbReference type="SUPFAM" id="SSF52210">
    <property type="entry name" value="Succinyl-CoA synthetase domains"/>
    <property type="match status" value="1"/>
</dbReference>
<dbReference type="PROSITE" id="PS50975">
    <property type="entry name" value="ATP_GRASP"/>
    <property type="match status" value="1"/>
</dbReference>
<dbReference type="PROSITE" id="PS01217">
    <property type="entry name" value="SUCCINYL_COA_LIG_3"/>
    <property type="match status" value="1"/>
</dbReference>
<gene>
    <name evidence="1" type="primary">sucC</name>
    <name type="ordered locus">LPC_2768</name>
</gene>